<name>LV1A1_LYCMC</name>
<keyword id="KW-1015">Disulfide bond</keyword>
<keyword id="KW-1213">G-protein coupled receptor impairing toxin</keyword>
<keyword id="KW-0872">Ion channel impairing toxin</keyword>
<keyword id="KW-0528">Neurotoxin</keyword>
<keyword id="KW-0632">Potassium channel impairing toxin</keyword>
<keyword id="KW-0691">RNA editing</keyword>
<keyword id="KW-0964">Secreted</keyword>
<keyword id="KW-0732">Signal</keyword>
<keyword id="KW-0800">Toxin</keyword>
<keyword id="KW-1220">Voltage-gated potassium channel impairing toxin</keyword>
<keyword id="KW-0738">Voltage-gated sodium channel impairing toxin</keyword>
<accession>D9U2A4</accession>
<protein>
    <recommendedName>
        <fullName>Lipolysis-activating peptide 1-alpha chain</fullName>
        <shortName>LVP1-alpha</shortName>
    </recommendedName>
    <alternativeName>
        <fullName>Neurotoxin LmNaTx27</fullName>
    </alternativeName>
    <component>
        <recommendedName>
            <fullName>Neurotoxin BmKBTx-like</fullName>
        </recommendedName>
    </component>
</protein>
<organism>
    <name type="scientific">Lychas mucronatus</name>
    <name type="common">Chinese swimming scorpion</name>
    <dbReference type="NCBI Taxonomy" id="172552"/>
    <lineage>
        <taxon>Eukaryota</taxon>
        <taxon>Metazoa</taxon>
        <taxon>Ecdysozoa</taxon>
        <taxon>Arthropoda</taxon>
        <taxon>Chelicerata</taxon>
        <taxon>Arachnida</taxon>
        <taxon>Scorpiones</taxon>
        <taxon>Buthida</taxon>
        <taxon>Buthoidea</taxon>
        <taxon>Buthidae</taxon>
        <taxon>Lychas</taxon>
    </lineage>
</organism>
<dbReference type="EMBL" id="EU159302">
    <property type="protein sequence ID" value="ABX76775.1"/>
    <property type="molecule type" value="mRNA"/>
</dbReference>
<dbReference type="SMR" id="D9U2A4"/>
<dbReference type="GO" id="GO:0005576">
    <property type="term" value="C:extracellular region"/>
    <property type="evidence" value="ECO:0007669"/>
    <property type="project" value="UniProtKB-SubCell"/>
</dbReference>
<dbReference type="GO" id="GO:0015459">
    <property type="term" value="F:potassium channel regulator activity"/>
    <property type="evidence" value="ECO:0007669"/>
    <property type="project" value="UniProtKB-KW"/>
</dbReference>
<dbReference type="GO" id="GO:0019871">
    <property type="term" value="F:sodium channel inhibitor activity"/>
    <property type="evidence" value="ECO:0007669"/>
    <property type="project" value="InterPro"/>
</dbReference>
<dbReference type="GO" id="GO:0090729">
    <property type="term" value="F:toxin activity"/>
    <property type="evidence" value="ECO:0007669"/>
    <property type="project" value="UniProtKB-KW"/>
</dbReference>
<dbReference type="CDD" id="cd23106">
    <property type="entry name" value="neurotoxins_LC_scorpion"/>
    <property type="match status" value="1"/>
</dbReference>
<dbReference type="Gene3D" id="3.30.30.10">
    <property type="entry name" value="Knottin, scorpion toxin-like"/>
    <property type="match status" value="1"/>
</dbReference>
<dbReference type="InterPro" id="IPR044062">
    <property type="entry name" value="LCN-type_CS_alpha_beta_dom"/>
</dbReference>
<dbReference type="InterPro" id="IPR036574">
    <property type="entry name" value="Scorpion_toxin-like_sf"/>
</dbReference>
<dbReference type="InterPro" id="IPR002061">
    <property type="entry name" value="Scorpion_toxinL/defensin"/>
</dbReference>
<dbReference type="Pfam" id="PF00537">
    <property type="entry name" value="Toxin_3"/>
    <property type="match status" value="1"/>
</dbReference>
<dbReference type="SUPFAM" id="SSF57095">
    <property type="entry name" value="Scorpion toxin-like"/>
    <property type="match status" value="1"/>
</dbReference>
<dbReference type="PROSITE" id="PS51863">
    <property type="entry name" value="LCN_CSAB"/>
    <property type="match status" value="1"/>
</dbReference>
<evidence type="ECO:0000250" key="1"/>
<evidence type="ECO:0000250" key="2">
    <source>
        <dbReference type="UniProtKB" id="P84810"/>
    </source>
</evidence>
<evidence type="ECO:0000255" key="3"/>
<evidence type="ECO:0000255" key="4">
    <source>
        <dbReference type="PROSITE-ProRule" id="PRU01210"/>
    </source>
</evidence>
<evidence type="ECO:0000305" key="5"/>
<evidence type="ECO:0000305" key="6">
    <source>
    </source>
</evidence>
<feature type="signal peptide" evidence="3">
    <location>
        <begin position="1"/>
        <end position="21"/>
    </location>
</feature>
<feature type="chain" id="PRO_0000403880" description="Lipolysis-activating peptide 1-alpha chain">
    <location>
        <begin position="22"/>
        <end position="97"/>
    </location>
</feature>
<feature type="chain" id="PRO_0000403881" description="Neurotoxin BmKBTx-like">
    <location>
        <begin position="22"/>
        <end position="79"/>
    </location>
</feature>
<feature type="domain" description="LCN-type CS-alpha/beta" evidence="4">
    <location>
        <begin position="25"/>
        <end position="88"/>
    </location>
</feature>
<feature type="disulfide bond" evidence="4">
    <location>
        <begin position="39"/>
        <end position="62"/>
    </location>
</feature>
<feature type="disulfide bond" evidence="4">
    <location>
        <begin position="48"/>
        <end position="67"/>
    </location>
</feature>
<feature type="disulfide bond" evidence="4">
    <location>
        <begin position="52"/>
        <end position="69"/>
    </location>
</feature>
<feature type="disulfide bond" description="Interchain (with C-86 in LVP1 chain beta)" evidence="1">
    <location>
        <position position="87"/>
    </location>
</feature>
<comment type="function">
    <text evidence="2">The heterodimer non-edited LVP1 induces lipolysis in rat adipocytes. Induction of lipolysis by LVP1 appears to be mediated through the beta-2 adrenergic receptor pathway (ADRB2) (By similarity).</text>
</comment>
<comment type="function">
    <text evidence="2">The edited BmKBTx-like, similar to beta-toxins, may modulate voltage-gated sodium channels (Nav) and may block voltage-gated potassium channels (Kv).</text>
</comment>
<comment type="subunit">
    <text evidence="2">Monomer (edited version) and heterodimer (non-edited version) of this alpha chain and a beta chain (AC D9U2A2).</text>
</comment>
<comment type="subcellular location">
    <subcellularLocation>
        <location evidence="6">Secreted</location>
    </subcellularLocation>
</comment>
<comment type="tissue specificity">
    <text evidence="6">Expressed by the venom gland.</text>
</comment>
<comment type="domain">
    <text evidence="5">Has the structural arrangement of an alpha-helix connected to antiparallel beta-sheets by disulfide bonds (CS-alpha/beta).</text>
</comment>
<comment type="RNA editing">
    <location>
        <position position="80" evidence="1"/>
    </location>
    <text evidence="1">The stop codon (UGA) at position 81 is created by RNA editing.</text>
</comment>
<comment type="similarity">
    <text evidence="5">Belongs to the long (3 C-C) scorpion toxin superfamily.</text>
</comment>
<proteinExistence type="inferred from homology"/>
<reference key="1">
    <citation type="journal article" date="2010" name="BMC Genomics">
        <title>Comparative venom gland transcriptome analysis of the scorpion Lychas mucronatus reveals intraspecific toxic gene diversity and new venomous components.</title>
        <authorList>
            <person name="Zhao R."/>
            <person name="Ma Y."/>
            <person name="He Y."/>
            <person name="Di Z."/>
            <person name="Wu Y.-L."/>
            <person name="Cao Z.-J."/>
            <person name="Li W.-X."/>
        </authorList>
    </citation>
    <scope>NUCLEOTIDE SEQUENCE [MRNA]</scope>
    <source>
        <strain>Hainan</strain>
        <tissue>Venom gland</tissue>
    </source>
</reference>
<sequence>MNITLFCSVFILISLAGLSVSDDVPGNYPMSLYGNKYSCGVLGENEYCRKICKSHGVSYGYCFNSRCWCEYLEDKDVDFWAAHKNHCKNDKLYPPKK</sequence>